<sequence length="173" mass="19189">MQKVKLPLTLDPVRTAQKRLDYQGIYTPDQVERVAESVVSVDSDVECSMSFAIDNQRLAVLTGDAVVTVSLECQRCGKPFTHQVHTTYCFSPVRSDEQAEALPEAYEPIEVNEFGEIDLLATVEDEIILALPVVPVHDSEHCEVSEADMVFGELPDEAQKPNPFAVLASLKRK</sequence>
<protein>
    <recommendedName>
        <fullName>Large ribosomal RNA subunit accumulation protein YceD</fullName>
    </recommendedName>
    <alternativeName>
        <fullName>23S rRNA accumulation protein YceD</fullName>
    </alternativeName>
</protein>
<accession>P0A1T3</accession>
<accession>O85137</accession>
<proteinExistence type="inferred from homology"/>
<evidence type="ECO:0000250" key="1">
    <source>
        <dbReference type="UniProtKB" id="P0AB28"/>
    </source>
</evidence>
<evidence type="ECO:0000305" key="2"/>
<keyword id="KW-0690">Ribosome biogenesis</keyword>
<gene>
    <name type="primary">yceD</name>
    <name type="ordered locus">STY1229</name>
    <name type="ordered locus">t1730</name>
</gene>
<name>YCED_SALTI</name>
<reference key="1">
    <citation type="journal article" date="2001" name="Nature">
        <title>Complete genome sequence of a multiple drug resistant Salmonella enterica serovar Typhi CT18.</title>
        <authorList>
            <person name="Parkhill J."/>
            <person name="Dougan G."/>
            <person name="James K.D."/>
            <person name="Thomson N.R."/>
            <person name="Pickard D."/>
            <person name="Wain J."/>
            <person name="Churcher C.M."/>
            <person name="Mungall K.L."/>
            <person name="Bentley S.D."/>
            <person name="Holden M.T.G."/>
            <person name="Sebaihia M."/>
            <person name="Baker S."/>
            <person name="Basham D."/>
            <person name="Brooks K."/>
            <person name="Chillingworth T."/>
            <person name="Connerton P."/>
            <person name="Cronin A."/>
            <person name="Davis P."/>
            <person name="Davies R.M."/>
            <person name="Dowd L."/>
            <person name="White N."/>
            <person name="Farrar J."/>
            <person name="Feltwell T."/>
            <person name="Hamlin N."/>
            <person name="Haque A."/>
            <person name="Hien T.T."/>
            <person name="Holroyd S."/>
            <person name="Jagels K."/>
            <person name="Krogh A."/>
            <person name="Larsen T.S."/>
            <person name="Leather S."/>
            <person name="Moule S."/>
            <person name="O'Gaora P."/>
            <person name="Parry C."/>
            <person name="Quail M.A."/>
            <person name="Rutherford K.M."/>
            <person name="Simmonds M."/>
            <person name="Skelton J."/>
            <person name="Stevens K."/>
            <person name="Whitehead S."/>
            <person name="Barrell B.G."/>
        </authorList>
    </citation>
    <scope>NUCLEOTIDE SEQUENCE [LARGE SCALE GENOMIC DNA]</scope>
    <source>
        <strain>CT18</strain>
    </source>
</reference>
<reference key="2">
    <citation type="journal article" date="2003" name="J. Bacteriol.">
        <title>Comparative genomics of Salmonella enterica serovar Typhi strains Ty2 and CT18.</title>
        <authorList>
            <person name="Deng W."/>
            <person name="Liou S.-R."/>
            <person name="Plunkett G. III"/>
            <person name="Mayhew G.F."/>
            <person name="Rose D.J."/>
            <person name="Burland V."/>
            <person name="Kodoyianni V."/>
            <person name="Schwartz D.C."/>
            <person name="Blattner F.R."/>
        </authorList>
    </citation>
    <scope>NUCLEOTIDE SEQUENCE [LARGE SCALE GENOMIC DNA]</scope>
    <source>
        <strain>ATCC 700931 / Ty2</strain>
    </source>
</reference>
<comment type="function">
    <text evidence="1">Plays a role in synthesis, processing and/or stability of 23S rRNA.</text>
</comment>
<comment type="similarity">
    <text evidence="2">Belongs to the DUF177 domain family.</text>
</comment>
<feature type="chain" id="PRO_0000168814" description="Large ribosomal RNA subunit accumulation protein YceD">
    <location>
        <begin position="1"/>
        <end position="173"/>
    </location>
</feature>
<organism>
    <name type="scientific">Salmonella typhi</name>
    <dbReference type="NCBI Taxonomy" id="90370"/>
    <lineage>
        <taxon>Bacteria</taxon>
        <taxon>Pseudomonadati</taxon>
        <taxon>Pseudomonadota</taxon>
        <taxon>Gammaproteobacteria</taxon>
        <taxon>Enterobacterales</taxon>
        <taxon>Enterobacteriaceae</taxon>
        <taxon>Salmonella</taxon>
    </lineage>
</organism>
<dbReference type="EMBL" id="AL513382">
    <property type="protein sequence ID" value="CAD08314.1"/>
    <property type="molecule type" value="Genomic_DNA"/>
</dbReference>
<dbReference type="EMBL" id="AE014613">
    <property type="protein sequence ID" value="AAO69354.1"/>
    <property type="molecule type" value="Genomic_DNA"/>
</dbReference>
<dbReference type="RefSeq" id="NP_455683.1">
    <property type="nucleotide sequence ID" value="NC_003198.1"/>
</dbReference>
<dbReference type="RefSeq" id="WP_001174492.1">
    <property type="nucleotide sequence ID" value="NZ_WSUR01000030.1"/>
</dbReference>
<dbReference type="STRING" id="220341.gene:17585194"/>
<dbReference type="KEGG" id="stt:t1730"/>
<dbReference type="KEGG" id="sty:STY1229"/>
<dbReference type="PATRIC" id="fig|220341.7.peg.1231"/>
<dbReference type="eggNOG" id="COG1399">
    <property type="taxonomic scope" value="Bacteria"/>
</dbReference>
<dbReference type="HOGENOM" id="CLU_094127_2_1_6"/>
<dbReference type="OMA" id="HITYCFS"/>
<dbReference type="OrthoDB" id="9786771at2"/>
<dbReference type="Proteomes" id="UP000000541">
    <property type="component" value="Chromosome"/>
</dbReference>
<dbReference type="Proteomes" id="UP000002670">
    <property type="component" value="Chromosome"/>
</dbReference>
<dbReference type="GO" id="GO:0005829">
    <property type="term" value="C:cytosol"/>
    <property type="evidence" value="ECO:0007669"/>
    <property type="project" value="TreeGrafter"/>
</dbReference>
<dbReference type="GO" id="GO:0042254">
    <property type="term" value="P:ribosome biogenesis"/>
    <property type="evidence" value="ECO:0007669"/>
    <property type="project" value="UniProtKB-KW"/>
</dbReference>
<dbReference type="InterPro" id="IPR003772">
    <property type="entry name" value="YceD"/>
</dbReference>
<dbReference type="InterPro" id="IPR039255">
    <property type="entry name" value="YceD_bac"/>
</dbReference>
<dbReference type="NCBIfam" id="NF008395">
    <property type="entry name" value="PRK11193.1"/>
    <property type="match status" value="1"/>
</dbReference>
<dbReference type="PANTHER" id="PTHR38099">
    <property type="entry name" value="LARGE RIBOSOMAL RNA SUBUNIT ACCUMULATION PROTEIN YCED"/>
    <property type="match status" value="1"/>
</dbReference>
<dbReference type="PANTHER" id="PTHR38099:SF1">
    <property type="entry name" value="LARGE RIBOSOMAL RNA SUBUNIT ACCUMULATION PROTEIN YCED"/>
    <property type="match status" value="1"/>
</dbReference>
<dbReference type="Pfam" id="PF02620">
    <property type="entry name" value="YceD"/>
    <property type="match status" value="1"/>
</dbReference>